<proteinExistence type="inferred from homology"/>
<sequence>MQSIILIGKPNVGKSSLFNRMARQRIAITSDISGTTRDTNKTQIHIHSKKAMLIDSGGLDESDELFKNVKKNTLKVAKESDIILYLVDGKLAPDDEDRQFFYSLKKLGKPIALVINKVDNKKDEERAWEFANFGVKEIFNLSVTHNVGLDELYEWLEKFLHEEFLIPDEEENLEDFLEYYEEGKEFQFKEVDQNHIRVGIVGRVNVGKSSLLNALVKQERSVVSSIAGTTIDPVNESVVHKDKVIEFVDTAGIRKRGKIQGLERFALNRTEKILSHSQIALLVLDAHEGFNELDERIAGLVAKHYLGVIIVLNKWDKSEMDFDKTVKELRLDRFKFLAYAPVISVSALSGKRVHVLLDKILQIFENFTQKIQTSKLNTLIENATRAHPLPHDYGKLVKIYYAVQYDLAPPKIALIMNRPKALHFSYKRYLQNQIRKEFNFEGVPLVIASRKKGSKENDES</sequence>
<gene>
    <name evidence="1" type="primary">der</name>
    <name type="synonym">engA</name>
    <name type="ordered locus">CJE0435</name>
</gene>
<keyword id="KW-0342">GTP-binding</keyword>
<keyword id="KW-0547">Nucleotide-binding</keyword>
<keyword id="KW-0677">Repeat</keyword>
<keyword id="KW-0690">Ribosome biogenesis</keyword>
<name>DER_CAMJR</name>
<comment type="function">
    <text evidence="1">GTPase that plays an essential role in the late steps of ribosome biogenesis.</text>
</comment>
<comment type="subunit">
    <text evidence="1">Associates with the 50S ribosomal subunit.</text>
</comment>
<comment type="similarity">
    <text evidence="1">Belongs to the TRAFAC class TrmE-Era-EngA-EngB-Septin-like GTPase superfamily. EngA (Der) GTPase family.</text>
</comment>
<organism>
    <name type="scientific">Campylobacter jejuni (strain RM1221)</name>
    <dbReference type="NCBI Taxonomy" id="195099"/>
    <lineage>
        <taxon>Bacteria</taxon>
        <taxon>Pseudomonadati</taxon>
        <taxon>Campylobacterota</taxon>
        <taxon>Epsilonproteobacteria</taxon>
        <taxon>Campylobacterales</taxon>
        <taxon>Campylobacteraceae</taxon>
        <taxon>Campylobacter</taxon>
    </lineage>
</organism>
<accession>Q5HW81</accession>
<reference key="1">
    <citation type="journal article" date="2005" name="PLoS Biol.">
        <title>Major structural differences and novel potential virulence mechanisms from the genomes of multiple Campylobacter species.</title>
        <authorList>
            <person name="Fouts D.E."/>
            <person name="Mongodin E.F."/>
            <person name="Mandrell R.E."/>
            <person name="Miller W.G."/>
            <person name="Rasko D.A."/>
            <person name="Ravel J."/>
            <person name="Brinkac L.M."/>
            <person name="DeBoy R.T."/>
            <person name="Parker C.T."/>
            <person name="Daugherty S.C."/>
            <person name="Dodson R.J."/>
            <person name="Durkin A.S."/>
            <person name="Madupu R."/>
            <person name="Sullivan S.A."/>
            <person name="Shetty J.U."/>
            <person name="Ayodeji M.A."/>
            <person name="Shvartsbeyn A."/>
            <person name="Schatz M.C."/>
            <person name="Badger J.H."/>
            <person name="Fraser C.M."/>
            <person name="Nelson K.E."/>
        </authorList>
    </citation>
    <scope>NUCLEOTIDE SEQUENCE [LARGE SCALE GENOMIC DNA]</scope>
    <source>
        <strain>RM1221</strain>
    </source>
</reference>
<evidence type="ECO:0000255" key="1">
    <source>
        <dbReference type="HAMAP-Rule" id="MF_00195"/>
    </source>
</evidence>
<feature type="chain" id="PRO_1000011596" description="GTPase Der">
    <location>
        <begin position="1"/>
        <end position="460"/>
    </location>
</feature>
<feature type="domain" description="EngA-type G 1">
    <location>
        <begin position="2"/>
        <end position="164"/>
    </location>
</feature>
<feature type="domain" description="EngA-type G 2">
    <location>
        <begin position="196"/>
        <end position="368"/>
    </location>
</feature>
<feature type="domain" description="KH-like" evidence="1">
    <location>
        <begin position="369"/>
        <end position="453"/>
    </location>
</feature>
<feature type="binding site" evidence="1">
    <location>
        <begin position="8"/>
        <end position="15"/>
    </location>
    <ligand>
        <name>GTP</name>
        <dbReference type="ChEBI" id="CHEBI:37565"/>
        <label>1</label>
    </ligand>
</feature>
<feature type="binding site" evidence="1">
    <location>
        <begin position="55"/>
        <end position="59"/>
    </location>
    <ligand>
        <name>GTP</name>
        <dbReference type="ChEBI" id="CHEBI:37565"/>
        <label>1</label>
    </ligand>
</feature>
<feature type="binding site" evidence="1">
    <location>
        <begin position="116"/>
        <end position="119"/>
    </location>
    <ligand>
        <name>GTP</name>
        <dbReference type="ChEBI" id="CHEBI:37565"/>
        <label>1</label>
    </ligand>
</feature>
<feature type="binding site" evidence="1">
    <location>
        <begin position="202"/>
        <end position="209"/>
    </location>
    <ligand>
        <name>GTP</name>
        <dbReference type="ChEBI" id="CHEBI:37565"/>
        <label>2</label>
    </ligand>
</feature>
<feature type="binding site" evidence="1">
    <location>
        <begin position="249"/>
        <end position="253"/>
    </location>
    <ligand>
        <name>GTP</name>
        <dbReference type="ChEBI" id="CHEBI:37565"/>
        <label>2</label>
    </ligand>
</feature>
<feature type="binding site" evidence="1">
    <location>
        <begin position="313"/>
        <end position="316"/>
    </location>
    <ligand>
        <name>GTP</name>
        <dbReference type="ChEBI" id="CHEBI:37565"/>
        <label>2</label>
    </ligand>
</feature>
<protein>
    <recommendedName>
        <fullName evidence="1">GTPase Der</fullName>
    </recommendedName>
    <alternativeName>
        <fullName evidence="1">GTP-binding protein EngA</fullName>
    </alternativeName>
</protein>
<dbReference type="EMBL" id="CP000025">
    <property type="protein sequence ID" value="AAW35024.1"/>
    <property type="molecule type" value="Genomic_DNA"/>
</dbReference>
<dbReference type="RefSeq" id="WP_002858744.1">
    <property type="nucleotide sequence ID" value="NC_003912.7"/>
</dbReference>
<dbReference type="SMR" id="Q5HW81"/>
<dbReference type="KEGG" id="cjr:CJE0435"/>
<dbReference type="HOGENOM" id="CLU_016077_6_2_7"/>
<dbReference type="GO" id="GO:0005525">
    <property type="term" value="F:GTP binding"/>
    <property type="evidence" value="ECO:0007669"/>
    <property type="project" value="UniProtKB-UniRule"/>
</dbReference>
<dbReference type="GO" id="GO:0043022">
    <property type="term" value="F:ribosome binding"/>
    <property type="evidence" value="ECO:0007669"/>
    <property type="project" value="TreeGrafter"/>
</dbReference>
<dbReference type="GO" id="GO:0042254">
    <property type="term" value="P:ribosome biogenesis"/>
    <property type="evidence" value="ECO:0007669"/>
    <property type="project" value="UniProtKB-KW"/>
</dbReference>
<dbReference type="CDD" id="cd01894">
    <property type="entry name" value="EngA1"/>
    <property type="match status" value="1"/>
</dbReference>
<dbReference type="CDD" id="cd01895">
    <property type="entry name" value="EngA2"/>
    <property type="match status" value="1"/>
</dbReference>
<dbReference type="FunFam" id="3.30.300.20:FF:000004">
    <property type="entry name" value="GTPase Der"/>
    <property type="match status" value="1"/>
</dbReference>
<dbReference type="Gene3D" id="3.30.300.20">
    <property type="match status" value="1"/>
</dbReference>
<dbReference type="Gene3D" id="3.40.50.300">
    <property type="entry name" value="P-loop containing nucleotide triphosphate hydrolases"/>
    <property type="match status" value="2"/>
</dbReference>
<dbReference type="HAMAP" id="MF_00195">
    <property type="entry name" value="GTPase_Der"/>
    <property type="match status" value="1"/>
</dbReference>
<dbReference type="InterPro" id="IPR031166">
    <property type="entry name" value="G_ENGA"/>
</dbReference>
<dbReference type="InterPro" id="IPR006073">
    <property type="entry name" value="GTP-bd"/>
</dbReference>
<dbReference type="InterPro" id="IPR016484">
    <property type="entry name" value="GTPase_Der"/>
</dbReference>
<dbReference type="InterPro" id="IPR032859">
    <property type="entry name" value="KH_dom-like"/>
</dbReference>
<dbReference type="InterPro" id="IPR015946">
    <property type="entry name" value="KH_dom-like_a/b"/>
</dbReference>
<dbReference type="InterPro" id="IPR027417">
    <property type="entry name" value="P-loop_NTPase"/>
</dbReference>
<dbReference type="InterPro" id="IPR005225">
    <property type="entry name" value="Small_GTP-bd"/>
</dbReference>
<dbReference type="NCBIfam" id="TIGR03594">
    <property type="entry name" value="GTPase_EngA"/>
    <property type="match status" value="1"/>
</dbReference>
<dbReference type="NCBIfam" id="TIGR00231">
    <property type="entry name" value="small_GTP"/>
    <property type="match status" value="2"/>
</dbReference>
<dbReference type="PANTHER" id="PTHR43834">
    <property type="entry name" value="GTPASE DER"/>
    <property type="match status" value="1"/>
</dbReference>
<dbReference type="PANTHER" id="PTHR43834:SF6">
    <property type="entry name" value="GTPASE DER"/>
    <property type="match status" value="1"/>
</dbReference>
<dbReference type="Pfam" id="PF14714">
    <property type="entry name" value="KH_dom-like"/>
    <property type="match status" value="1"/>
</dbReference>
<dbReference type="Pfam" id="PF01926">
    <property type="entry name" value="MMR_HSR1"/>
    <property type="match status" value="2"/>
</dbReference>
<dbReference type="PIRSF" id="PIRSF006485">
    <property type="entry name" value="GTP-binding_EngA"/>
    <property type="match status" value="1"/>
</dbReference>
<dbReference type="PRINTS" id="PR00326">
    <property type="entry name" value="GTP1OBG"/>
</dbReference>
<dbReference type="SUPFAM" id="SSF52540">
    <property type="entry name" value="P-loop containing nucleoside triphosphate hydrolases"/>
    <property type="match status" value="2"/>
</dbReference>
<dbReference type="PROSITE" id="PS51712">
    <property type="entry name" value="G_ENGA"/>
    <property type="match status" value="2"/>
</dbReference>